<organism>
    <name type="scientific">Vibrio vulnificus (strain YJ016)</name>
    <dbReference type="NCBI Taxonomy" id="196600"/>
    <lineage>
        <taxon>Bacteria</taxon>
        <taxon>Pseudomonadati</taxon>
        <taxon>Pseudomonadota</taxon>
        <taxon>Gammaproteobacteria</taxon>
        <taxon>Vibrionales</taxon>
        <taxon>Vibrionaceae</taxon>
        <taxon>Vibrio</taxon>
    </lineage>
</organism>
<accession>Q7MFH3</accession>
<comment type="function">
    <text evidence="1">Probably part of an ABC transporter complex. Responsible for energy coupling to the transport system (By similarity).</text>
</comment>
<comment type="subcellular location">
    <subcellularLocation>
        <location evidence="1">Cell inner membrane</location>
        <topology evidence="1">Peripheral membrane protein</topology>
    </subcellularLocation>
</comment>
<comment type="similarity">
    <text evidence="3">Belongs to the ABC transporter superfamily.</text>
</comment>
<protein>
    <recommendedName>
        <fullName>Putative ABC transporter ATP-binding protein VVA0347</fullName>
        <ecNumber>7.-.-.-</ecNumber>
    </recommendedName>
</protein>
<sequence length="574" mass="63879">MTIEFSNFSFRYESLDKPTLRNINLRIEKGEKIVIIGPSGSGKSTLGQCLNGLIPHAIKGEVSGSLTINGQETATFAMHQFTEQVGTVLQDTDSQFVGLSIGEDIAFALENQLTANIEMYSLVKATAKMVDLEQMLQRSPHDLSGGQKQRVSLAGILVDDVDILLFDEPLAALDPKTGKRTIEIIDDLHRKTGKTVVIIEHRLEDVLHRHVDRIILMDGGEIIADTTPDELLASPLLAQYGIREPLYLTALKSAGCHLALDDHPSSLSELPLANYQHAMADWFHQANTTSNHIRSETLLDVRNLTYSYDGEKNALEGVSFNVQRGEFVSILGKNGSGKSTITKLIMGVIEPDDGTMHLNGQDLSELTIFERSQKVGVVMQNPNHMISHHMIFDEVAFGLRNRGWDEQQVNDKVLEALELCGLSKYRHWPIEALSYGQKKRVTIASILALEPELLMLDEPTAGQDYRNYTSMLSFIEKLNRELGITVVIISHDMHLVLEYTTRSIVIADSQLVADAPMTDVFSNPALLDRANLTTTSLYELATRLNMAETNAFMQHFIDVEKASRLEKTVERNVA</sequence>
<evidence type="ECO:0000250" key="1"/>
<evidence type="ECO:0000255" key="2">
    <source>
        <dbReference type="PROSITE-ProRule" id="PRU00434"/>
    </source>
</evidence>
<evidence type="ECO:0000305" key="3"/>
<dbReference type="EC" id="7.-.-.-"/>
<dbReference type="EMBL" id="BA000038">
    <property type="protein sequence ID" value="BAC96373.1"/>
    <property type="molecule type" value="Genomic_DNA"/>
</dbReference>
<dbReference type="RefSeq" id="WP_011151745.1">
    <property type="nucleotide sequence ID" value="NC_005140.1"/>
</dbReference>
<dbReference type="SMR" id="Q7MFH3"/>
<dbReference type="STRING" id="672.VV93_v1c33330"/>
<dbReference type="KEGG" id="vvy:VVA0347"/>
<dbReference type="PATRIC" id="fig|196600.6.peg.3553"/>
<dbReference type="eggNOG" id="COG1122">
    <property type="taxonomic scope" value="Bacteria"/>
</dbReference>
<dbReference type="HOGENOM" id="CLU_000604_86_7_6"/>
<dbReference type="Proteomes" id="UP000002675">
    <property type="component" value="Chromosome II"/>
</dbReference>
<dbReference type="GO" id="GO:0043190">
    <property type="term" value="C:ATP-binding cassette (ABC) transporter complex"/>
    <property type="evidence" value="ECO:0007669"/>
    <property type="project" value="TreeGrafter"/>
</dbReference>
<dbReference type="GO" id="GO:0005524">
    <property type="term" value="F:ATP binding"/>
    <property type="evidence" value="ECO:0007669"/>
    <property type="project" value="UniProtKB-KW"/>
</dbReference>
<dbReference type="GO" id="GO:0016887">
    <property type="term" value="F:ATP hydrolysis activity"/>
    <property type="evidence" value="ECO:0007669"/>
    <property type="project" value="InterPro"/>
</dbReference>
<dbReference type="GO" id="GO:0042626">
    <property type="term" value="F:ATPase-coupled transmembrane transporter activity"/>
    <property type="evidence" value="ECO:0007669"/>
    <property type="project" value="TreeGrafter"/>
</dbReference>
<dbReference type="CDD" id="cd03225">
    <property type="entry name" value="ABC_cobalt_CbiO_domain1"/>
    <property type="match status" value="2"/>
</dbReference>
<dbReference type="FunFam" id="3.40.50.300:FF:001422">
    <property type="entry name" value="Cobalt ABC transporter ATP-binding protein"/>
    <property type="match status" value="1"/>
</dbReference>
<dbReference type="FunFam" id="3.40.50.300:FF:000224">
    <property type="entry name" value="Energy-coupling factor transporter ATP-binding protein EcfA"/>
    <property type="match status" value="1"/>
</dbReference>
<dbReference type="Gene3D" id="3.40.50.300">
    <property type="entry name" value="P-loop containing nucleotide triphosphate hydrolases"/>
    <property type="match status" value="2"/>
</dbReference>
<dbReference type="InterPro" id="IPR003593">
    <property type="entry name" value="AAA+_ATPase"/>
</dbReference>
<dbReference type="InterPro" id="IPR022216">
    <property type="entry name" value="ABC_Co_transporter"/>
</dbReference>
<dbReference type="InterPro" id="IPR003439">
    <property type="entry name" value="ABC_transporter-like_ATP-bd"/>
</dbReference>
<dbReference type="InterPro" id="IPR017871">
    <property type="entry name" value="ABC_transporter-like_CS"/>
</dbReference>
<dbReference type="InterPro" id="IPR015856">
    <property type="entry name" value="ABC_transpr_CbiO/EcfA_su"/>
</dbReference>
<dbReference type="InterPro" id="IPR050095">
    <property type="entry name" value="ECF_ABC_transporter_ATP-bd"/>
</dbReference>
<dbReference type="InterPro" id="IPR027417">
    <property type="entry name" value="P-loop_NTPase"/>
</dbReference>
<dbReference type="NCBIfam" id="NF010167">
    <property type="entry name" value="PRK13648.1"/>
    <property type="match status" value="2"/>
</dbReference>
<dbReference type="PANTHER" id="PTHR43553:SF26">
    <property type="entry name" value="ABC TRANSPORTER ATP-BINDING PROTEIN BC_2655-RELATED"/>
    <property type="match status" value="1"/>
</dbReference>
<dbReference type="PANTHER" id="PTHR43553">
    <property type="entry name" value="HEAVY METAL TRANSPORTER"/>
    <property type="match status" value="1"/>
</dbReference>
<dbReference type="Pfam" id="PF00005">
    <property type="entry name" value="ABC_tran"/>
    <property type="match status" value="2"/>
</dbReference>
<dbReference type="Pfam" id="PF12558">
    <property type="entry name" value="DUF3744"/>
    <property type="match status" value="1"/>
</dbReference>
<dbReference type="SMART" id="SM00382">
    <property type="entry name" value="AAA"/>
    <property type="match status" value="2"/>
</dbReference>
<dbReference type="SUPFAM" id="SSF52540">
    <property type="entry name" value="P-loop containing nucleoside triphosphate hydrolases"/>
    <property type="match status" value="2"/>
</dbReference>
<dbReference type="PROSITE" id="PS00211">
    <property type="entry name" value="ABC_TRANSPORTER_1"/>
    <property type="match status" value="2"/>
</dbReference>
<dbReference type="PROSITE" id="PS50893">
    <property type="entry name" value="ABC_TRANSPORTER_2"/>
    <property type="match status" value="2"/>
</dbReference>
<name>Y4347_VIBVY</name>
<proteinExistence type="inferred from homology"/>
<gene>
    <name type="ordered locus">VVA0347</name>
</gene>
<feature type="chain" id="PRO_0000092128" description="Putative ABC transporter ATP-binding protein VVA0347">
    <location>
        <begin position="1"/>
        <end position="574"/>
    </location>
</feature>
<feature type="domain" description="ABC transporter 1" evidence="2">
    <location>
        <begin position="3"/>
        <end position="244"/>
    </location>
</feature>
<feature type="domain" description="ABC transporter 2" evidence="2">
    <location>
        <begin position="299"/>
        <end position="533"/>
    </location>
</feature>
<feature type="binding site" evidence="2">
    <location>
        <begin position="37"/>
        <end position="44"/>
    </location>
    <ligand>
        <name>ATP</name>
        <dbReference type="ChEBI" id="CHEBI:30616"/>
        <label>1</label>
    </ligand>
</feature>
<feature type="binding site" evidence="2">
    <location>
        <begin position="332"/>
        <end position="339"/>
    </location>
    <ligand>
        <name>ATP</name>
        <dbReference type="ChEBI" id="CHEBI:30616"/>
        <label>2</label>
    </ligand>
</feature>
<reference key="1">
    <citation type="journal article" date="2003" name="Genome Res.">
        <title>Comparative genome analysis of Vibrio vulnificus, a marine pathogen.</title>
        <authorList>
            <person name="Chen C.-Y."/>
            <person name="Wu K.-M."/>
            <person name="Chang Y.-C."/>
            <person name="Chang C.-H."/>
            <person name="Tsai H.-C."/>
            <person name="Liao T.-L."/>
            <person name="Liu Y.-M."/>
            <person name="Chen H.-J."/>
            <person name="Shen A.B.-T."/>
            <person name="Li J.-C."/>
            <person name="Su T.-L."/>
            <person name="Shao C.-P."/>
            <person name="Lee C.-T."/>
            <person name="Hor L.-I."/>
            <person name="Tsai S.-F."/>
        </authorList>
    </citation>
    <scope>NUCLEOTIDE SEQUENCE [LARGE SCALE GENOMIC DNA]</scope>
    <source>
        <strain>YJ016</strain>
    </source>
</reference>
<keyword id="KW-0067">ATP-binding</keyword>
<keyword id="KW-0997">Cell inner membrane</keyword>
<keyword id="KW-1003">Cell membrane</keyword>
<keyword id="KW-0472">Membrane</keyword>
<keyword id="KW-0547">Nucleotide-binding</keyword>
<keyword id="KW-0677">Repeat</keyword>
<keyword id="KW-1278">Translocase</keyword>
<keyword id="KW-0813">Transport</keyword>